<feature type="chain" id="PRO_1000115398" description="Chorismate synthase">
    <location>
        <begin position="1"/>
        <end position="361"/>
    </location>
</feature>
<feature type="binding site" evidence="1">
    <location>
        <position position="48"/>
    </location>
    <ligand>
        <name>NADP(+)</name>
        <dbReference type="ChEBI" id="CHEBI:58349"/>
    </ligand>
</feature>
<feature type="binding site" evidence="1">
    <location>
        <position position="54"/>
    </location>
    <ligand>
        <name>NADP(+)</name>
        <dbReference type="ChEBI" id="CHEBI:58349"/>
    </ligand>
</feature>
<feature type="binding site" evidence="1">
    <location>
        <begin position="125"/>
        <end position="127"/>
    </location>
    <ligand>
        <name>FMN</name>
        <dbReference type="ChEBI" id="CHEBI:58210"/>
    </ligand>
</feature>
<feature type="binding site" evidence="1">
    <location>
        <begin position="238"/>
        <end position="239"/>
    </location>
    <ligand>
        <name>FMN</name>
        <dbReference type="ChEBI" id="CHEBI:58210"/>
    </ligand>
</feature>
<feature type="binding site" evidence="1">
    <location>
        <position position="278"/>
    </location>
    <ligand>
        <name>FMN</name>
        <dbReference type="ChEBI" id="CHEBI:58210"/>
    </ligand>
</feature>
<feature type="binding site" evidence="1">
    <location>
        <begin position="293"/>
        <end position="297"/>
    </location>
    <ligand>
        <name>FMN</name>
        <dbReference type="ChEBI" id="CHEBI:58210"/>
    </ligand>
</feature>
<feature type="binding site" evidence="1">
    <location>
        <position position="319"/>
    </location>
    <ligand>
        <name>FMN</name>
        <dbReference type="ChEBI" id="CHEBI:58210"/>
    </ligand>
</feature>
<protein>
    <recommendedName>
        <fullName evidence="1">Chorismate synthase</fullName>
        <shortName evidence="1">CS</shortName>
        <ecNumber evidence="1">4.2.3.5</ecNumber>
    </recommendedName>
    <alternativeName>
        <fullName evidence="1">5-enolpyruvylshikimate-3-phosphate phospholyase</fullName>
    </alternativeName>
</protein>
<reference key="1">
    <citation type="journal article" date="2011" name="J. Bacteriol.">
        <title>Comparative genomics of 28 Salmonella enterica isolates: evidence for CRISPR-mediated adaptive sublineage evolution.</title>
        <authorList>
            <person name="Fricke W.F."/>
            <person name="Mammel M.K."/>
            <person name="McDermott P.F."/>
            <person name="Tartera C."/>
            <person name="White D.G."/>
            <person name="Leclerc J.E."/>
            <person name="Ravel J."/>
            <person name="Cebula T.A."/>
        </authorList>
    </citation>
    <scope>NUCLEOTIDE SEQUENCE [LARGE SCALE GENOMIC DNA]</scope>
    <source>
        <strain>CVM19633</strain>
    </source>
</reference>
<comment type="function">
    <text evidence="1">Catalyzes the anti-1,4-elimination of the C-3 phosphate and the C-6 proR hydrogen from 5-enolpyruvylshikimate-3-phosphate (EPSP) to yield chorismate, which is the branch point compound that serves as the starting substrate for the three terminal pathways of aromatic amino acid biosynthesis. This reaction introduces a second double bond into the aromatic ring system.</text>
</comment>
<comment type="catalytic activity">
    <reaction evidence="1">
        <text>5-O-(1-carboxyvinyl)-3-phosphoshikimate = chorismate + phosphate</text>
        <dbReference type="Rhea" id="RHEA:21020"/>
        <dbReference type="ChEBI" id="CHEBI:29748"/>
        <dbReference type="ChEBI" id="CHEBI:43474"/>
        <dbReference type="ChEBI" id="CHEBI:57701"/>
        <dbReference type="EC" id="4.2.3.5"/>
    </reaction>
</comment>
<comment type="cofactor">
    <cofactor evidence="1">
        <name>FMNH2</name>
        <dbReference type="ChEBI" id="CHEBI:57618"/>
    </cofactor>
    <text evidence="1">Reduced FMN (FMNH(2)).</text>
</comment>
<comment type="pathway">
    <text evidence="1">Metabolic intermediate biosynthesis; chorismate biosynthesis; chorismate from D-erythrose 4-phosphate and phosphoenolpyruvate: step 7/7.</text>
</comment>
<comment type="subunit">
    <text evidence="1">Homotetramer.</text>
</comment>
<comment type="similarity">
    <text evidence="1">Belongs to the chorismate synthase family.</text>
</comment>
<dbReference type="EC" id="4.2.3.5" evidence="1"/>
<dbReference type="EMBL" id="CP001127">
    <property type="protein sequence ID" value="ACF90790.1"/>
    <property type="molecule type" value="Genomic_DNA"/>
</dbReference>
<dbReference type="RefSeq" id="WP_000918457.1">
    <property type="nucleotide sequence ID" value="NC_011094.1"/>
</dbReference>
<dbReference type="SMR" id="B4TQB9"/>
<dbReference type="KEGG" id="sew:SeSA_A2613"/>
<dbReference type="HOGENOM" id="CLU_034547_0_2_6"/>
<dbReference type="UniPathway" id="UPA00053">
    <property type="reaction ID" value="UER00090"/>
</dbReference>
<dbReference type="Proteomes" id="UP000001865">
    <property type="component" value="Chromosome"/>
</dbReference>
<dbReference type="GO" id="GO:0005829">
    <property type="term" value="C:cytosol"/>
    <property type="evidence" value="ECO:0007669"/>
    <property type="project" value="TreeGrafter"/>
</dbReference>
<dbReference type="GO" id="GO:0004107">
    <property type="term" value="F:chorismate synthase activity"/>
    <property type="evidence" value="ECO:0007669"/>
    <property type="project" value="UniProtKB-UniRule"/>
</dbReference>
<dbReference type="GO" id="GO:0010181">
    <property type="term" value="F:FMN binding"/>
    <property type="evidence" value="ECO:0007669"/>
    <property type="project" value="TreeGrafter"/>
</dbReference>
<dbReference type="GO" id="GO:0008652">
    <property type="term" value="P:amino acid biosynthetic process"/>
    <property type="evidence" value="ECO:0007669"/>
    <property type="project" value="UniProtKB-KW"/>
</dbReference>
<dbReference type="GO" id="GO:0009073">
    <property type="term" value="P:aromatic amino acid family biosynthetic process"/>
    <property type="evidence" value="ECO:0007669"/>
    <property type="project" value="UniProtKB-KW"/>
</dbReference>
<dbReference type="GO" id="GO:0009423">
    <property type="term" value="P:chorismate biosynthetic process"/>
    <property type="evidence" value="ECO:0007669"/>
    <property type="project" value="UniProtKB-UniRule"/>
</dbReference>
<dbReference type="CDD" id="cd07304">
    <property type="entry name" value="Chorismate_synthase"/>
    <property type="match status" value="1"/>
</dbReference>
<dbReference type="FunFam" id="3.60.150.10:FF:000001">
    <property type="entry name" value="Chorismate synthase"/>
    <property type="match status" value="1"/>
</dbReference>
<dbReference type="Gene3D" id="3.60.150.10">
    <property type="entry name" value="Chorismate synthase AroC"/>
    <property type="match status" value="1"/>
</dbReference>
<dbReference type="HAMAP" id="MF_00300">
    <property type="entry name" value="Chorismate_synth"/>
    <property type="match status" value="1"/>
</dbReference>
<dbReference type="InterPro" id="IPR000453">
    <property type="entry name" value="Chorismate_synth"/>
</dbReference>
<dbReference type="InterPro" id="IPR035904">
    <property type="entry name" value="Chorismate_synth_AroC_sf"/>
</dbReference>
<dbReference type="InterPro" id="IPR020541">
    <property type="entry name" value="Chorismate_synthase_CS"/>
</dbReference>
<dbReference type="NCBIfam" id="TIGR00033">
    <property type="entry name" value="aroC"/>
    <property type="match status" value="1"/>
</dbReference>
<dbReference type="NCBIfam" id="NF003793">
    <property type="entry name" value="PRK05382.1"/>
    <property type="match status" value="1"/>
</dbReference>
<dbReference type="PANTHER" id="PTHR21085">
    <property type="entry name" value="CHORISMATE SYNTHASE"/>
    <property type="match status" value="1"/>
</dbReference>
<dbReference type="PANTHER" id="PTHR21085:SF0">
    <property type="entry name" value="CHORISMATE SYNTHASE"/>
    <property type="match status" value="1"/>
</dbReference>
<dbReference type="Pfam" id="PF01264">
    <property type="entry name" value="Chorismate_synt"/>
    <property type="match status" value="1"/>
</dbReference>
<dbReference type="PIRSF" id="PIRSF001456">
    <property type="entry name" value="Chorismate_synth"/>
    <property type="match status" value="1"/>
</dbReference>
<dbReference type="SUPFAM" id="SSF103263">
    <property type="entry name" value="Chorismate synthase, AroC"/>
    <property type="match status" value="1"/>
</dbReference>
<dbReference type="PROSITE" id="PS00787">
    <property type="entry name" value="CHORISMATE_SYNTHASE_1"/>
    <property type="match status" value="1"/>
</dbReference>
<dbReference type="PROSITE" id="PS00788">
    <property type="entry name" value="CHORISMATE_SYNTHASE_2"/>
    <property type="match status" value="1"/>
</dbReference>
<dbReference type="PROSITE" id="PS00789">
    <property type="entry name" value="CHORISMATE_SYNTHASE_3"/>
    <property type="match status" value="1"/>
</dbReference>
<name>AROC_SALSV</name>
<keyword id="KW-0028">Amino-acid biosynthesis</keyword>
<keyword id="KW-0057">Aromatic amino acid biosynthesis</keyword>
<keyword id="KW-0274">FAD</keyword>
<keyword id="KW-0285">Flavoprotein</keyword>
<keyword id="KW-0288">FMN</keyword>
<keyword id="KW-0456">Lyase</keyword>
<keyword id="KW-0521">NADP</keyword>
<gene>
    <name evidence="1" type="primary">aroC</name>
    <name type="ordered locus">SeSA_A2613</name>
</gene>
<proteinExistence type="inferred from homology"/>
<organism>
    <name type="scientific">Salmonella schwarzengrund (strain CVM19633)</name>
    <dbReference type="NCBI Taxonomy" id="439843"/>
    <lineage>
        <taxon>Bacteria</taxon>
        <taxon>Pseudomonadati</taxon>
        <taxon>Pseudomonadota</taxon>
        <taxon>Gammaproteobacteria</taxon>
        <taxon>Enterobacterales</taxon>
        <taxon>Enterobacteriaceae</taxon>
        <taxon>Salmonella</taxon>
    </lineage>
</organism>
<accession>B4TQB9</accession>
<sequence>MAGNTIGQLFRVTTFGESHGLALGCIVDGVPPGIPLTEADLQHDLDRRRPGTSRYTTQRREPDQVKILSGVFDGVTTGTSIGLLIENTDQRSQDYSAIKDVFRPGHADYTYEQKYGLRDYRGGGRSSARETAMRVAAGAIAKKYLAEKFGIEIRGCLTQMGDIPLEIKDWRQVELNPFFCPDADKLDALDELMRALKKEGDSIGAKVTVMASGVPAGLGEPVFDRLDADIAHALMSINAVKGVEIGEGFNVVALRGSQNRDEITAQGFQSNHAGGILGGISSGQHIVAHMALKPTSSITVPGRTINRMGEEVEMITKGRHDPCVGIRAVPIAEAMLAIVLMDHLLRHRAQNADVKTEIPRW</sequence>
<evidence type="ECO:0000255" key="1">
    <source>
        <dbReference type="HAMAP-Rule" id="MF_00300"/>
    </source>
</evidence>